<organism>
    <name type="scientific">Mycobacterium tuberculosis (strain CDC 1551 / Oshkosh)</name>
    <dbReference type="NCBI Taxonomy" id="83331"/>
    <lineage>
        <taxon>Bacteria</taxon>
        <taxon>Bacillati</taxon>
        <taxon>Actinomycetota</taxon>
        <taxon>Actinomycetes</taxon>
        <taxon>Mycobacteriales</taxon>
        <taxon>Mycobacteriaceae</taxon>
        <taxon>Mycobacterium</taxon>
        <taxon>Mycobacterium tuberculosis complex</taxon>
    </lineage>
</organism>
<reference key="1">
    <citation type="journal article" date="2002" name="J. Bacteriol.">
        <title>Whole-genome comparison of Mycobacterium tuberculosis clinical and laboratory strains.</title>
        <authorList>
            <person name="Fleischmann R.D."/>
            <person name="Alland D."/>
            <person name="Eisen J.A."/>
            <person name="Carpenter L."/>
            <person name="White O."/>
            <person name="Peterson J.D."/>
            <person name="DeBoy R.T."/>
            <person name="Dodson R.J."/>
            <person name="Gwinn M.L."/>
            <person name="Haft D.H."/>
            <person name="Hickey E.K."/>
            <person name="Kolonay J.F."/>
            <person name="Nelson W.C."/>
            <person name="Umayam L.A."/>
            <person name="Ermolaeva M.D."/>
            <person name="Salzberg S.L."/>
            <person name="Delcher A."/>
            <person name="Utterback T.R."/>
            <person name="Weidman J.F."/>
            <person name="Khouri H.M."/>
            <person name="Gill J."/>
            <person name="Mikula A."/>
            <person name="Bishai W."/>
            <person name="Jacobs W.R. Jr."/>
            <person name="Venter J.C."/>
            <person name="Fraser C.M."/>
        </authorList>
    </citation>
    <scope>NUCLEOTIDE SEQUENCE [LARGE SCALE GENOMIC DNA]</scope>
    <source>
        <strain>CDC 1551 / Oshkosh</strain>
    </source>
</reference>
<keyword id="KW-0067">ATP-binding</keyword>
<keyword id="KW-0131">Cell cycle</keyword>
<keyword id="KW-0132">Cell division</keyword>
<keyword id="KW-0133">Cell shape</keyword>
<keyword id="KW-0961">Cell wall biogenesis/degradation</keyword>
<keyword id="KW-0963">Cytoplasm</keyword>
<keyword id="KW-0436">Ligase</keyword>
<keyword id="KW-0547">Nucleotide-binding</keyword>
<keyword id="KW-0573">Peptidoglycan synthesis</keyword>
<keyword id="KW-1185">Reference proteome</keyword>
<gene>
    <name evidence="1" type="primary">murF</name>
    <name type="ordered locus">MT2216</name>
</gene>
<sequence length="510" mass="51790">MIELTVAQIAEIVGGAVADISPQDAAHRRVTGTVEFDSRAIGPGGLFLRLPGARADGHDHAASAVAAGAAVVLAARPVGVPAIVVPPVAAPNVLAGVLEHDNDGSGAAVLAALAKLATAVAAQLVAGGLTIIGITGSSGKTSTKDLMAAVLAPLGEVVAPPGSFNNELGHPWTVLRATRRTDYLILEMAARHHGNIAALAEIAPPSIGVVLNVGTAHLGEFGSREVIAQTKAELPQAVPHSGAVVLNADDPAVAAMAKLTAARVVRVSRDNTGDVWAGPVSLDELARPRFTLHAHDAQAEVRLGVCGDHQVTNALCAAAVALECGASVEQVAAALTAAPPVSRHRMQVTTRGDGVTVIDDAYNANPDSMRAGLQALAWIAHQPEATRRSWAVLGEMAELGEDAIAEHDRIGRLAVRLDVSRLVVVGTGRSISAMHHGAVLEEAWGSGEATADHGADRTAVNVADGDAALALLRAELRPGDVVLVKASNAAGLGAVADALVADDTCGSVRP</sequence>
<protein>
    <recommendedName>
        <fullName evidence="1">UDP-N-acetylmuramoyl-tripeptide--D-alanyl-D-alanine ligase</fullName>
        <ecNumber evidence="1">6.3.2.10</ecNumber>
    </recommendedName>
    <alternativeName>
        <fullName evidence="1">D-alanyl-D-alanine-adding enzyme</fullName>
    </alternativeName>
    <alternativeName>
        <fullName>UDP-MurNAc-pentapeptide synthetase</fullName>
    </alternativeName>
</protein>
<name>MURF_MYCTO</name>
<proteinExistence type="inferred from homology"/>
<feature type="chain" id="PRO_0000427811" description="UDP-N-acetylmuramoyl-tripeptide--D-alanyl-D-alanine ligase">
    <location>
        <begin position="1"/>
        <end position="510"/>
    </location>
</feature>
<feature type="binding site" evidence="1">
    <location>
        <begin position="136"/>
        <end position="142"/>
    </location>
    <ligand>
        <name>ATP</name>
        <dbReference type="ChEBI" id="CHEBI:30616"/>
    </ligand>
</feature>
<dbReference type="EC" id="6.3.2.10" evidence="1"/>
<dbReference type="EMBL" id="AE000516">
    <property type="protein sequence ID" value="AAK46500.1"/>
    <property type="molecule type" value="Genomic_DNA"/>
</dbReference>
<dbReference type="PIR" id="A70580">
    <property type="entry name" value="A70580"/>
</dbReference>
<dbReference type="RefSeq" id="WP_010924499.1">
    <property type="nucleotide sequence ID" value="NC_002755.2"/>
</dbReference>
<dbReference type="SMR" id="P9WJL0"/>
<dbReference type="KEGG" id="mtc:MT2216"/>
<dbReference type="HOGENOM" id="CLU_031507_0_0_11"/>
<dbReference type="UniPathway" id="UPA00219"/>
<dbReference type="Proteomes" id="UP000001020">
    <property type="component" value="Chromosome"/>
</dbReference>
<dbReference type="GO" id="GO:0005737">
    <property type="term" value="C:cytoplasm"/>
    <property type="evidence" value="ECO:0007669"/>
    <property type="project" value="UniProtKB-SubCell"/>
</dbReference>
<dbReference type="GO" id="GO:0005524">
    <property type="term" value="F:ATP binding"/>
    <property type="evidence" value="ECO:0007669"/>
    <property type="project" value="UniProtKB-UniRule"/>
</dbReference>
<dbReference type="GO" id="GO:0047480">
    <property type="term" value="F:UDP-N-acetylmuramoyl-tripeptide-D-alanyl-D-alanine ligase activity"/>
    <property type="evidence" value="ECO:0007669"/>
    <property type="project" value="UniProtKB-UniRule"/>
</dbReference>
<dbReference type="GO" id="GO:0008766">
    <property type="term" value="F:UDP-N-acetylmuramoylalanyl-D-glutamyl-2,6-diaminopimelate-D-alanyl-D-alanine ligase activity"/>
    <property type="evidence" value="ECO:0007669"/>
    <property type="project" value="RHEA"/>
</dbReference>
<dbReference type="GO" id="GO:0051301">
    <property type="term" value="P:cell division"/>
    <property type="evidence" value="ECO:0007669"/>
    <property type="project" value="UniProtKB-KW"/>
</dbReference>
<dbReference type="GO" id="GO:0071555">
    <property type="term" value="P:cell wall organization"/>
    <property type="evidence" value="ECO:0007669"/>
    <property type="project" value="UniProtKB-KW"/>
</dbReference>
<dbReference type="GO" id="GO:0009252">
    <property type="term" value="P:peptidoglycan biosynthetic process"/>
    <property type="evidence" value="ECO:0007669"/>
    <property type="project" value="UniProtKB-UniRule"/>
</dbReference>
<dbReference type="GO" id="GO:0008360">
    <property type="term" value="P:regulation of cell shape"/>
    <property type="evidence" value="ECO:0007669"/>
    <property type="project" value="UniProtKB-KW"/>
</dbReference>
<dbReference type="Gene3D" id="3.90.190.20">
    <property type="entry name" value="Mur ligase, C-terminal domain"/>
    <property type="match status" value="1"/>
</dbReference>
<dbReference type="Gene3D" id="3.40.1190.10">
    <property type="entry name" value="Mur-like, catalytic domain"/>
    <property type="match status" value="1"/>
</dbReference>
<dbReference type="Gene3D" id="3.40.1390.10">
    <property type="entry name" value="MurE/MurF, N-terminal domain"/>
    <property type="match status" value="1"/>
</dbReference>
<dbReference type="HAMAP" id="MF_02019">
    <property type="entry name" value="MurF"/>
    <property type="match status" value="1"/>
</dbReference>
<dbReference type="InterPro" id="IPR036565">
    <property type="entry name" value="Mur-like_cat_sf"/>
</dbReference>
<dbReference type="InterPro" id="IPR004101">
    <property type="entry name" value="Mur_ligase_C"/>
</dbReference>
<dbReference type="InterPro" id="IPR036615">
    <property type="entry name" value="Mur_ligase_C_dom_sf"/>
</dbReference>
<dbReference type="InterPro" id="IPR013221">
    <property type="entry name" value="Mur_ligase_cen"/>
</dbReference>
<dbReference type="InterPro" id="IPR000713">
    <property type="entry name" value="Mur_ligase_N"/>
</dbReference>
<dbReference type="InterPro" id="IPR051046">
    <property type="entry name" value="MurCDEF_CellWall_CoF430Synth"/>
</dbReference>
<dbReference type="InterPro" id="IPR035911">
    <property type="entry name" value="MurE/MurF_N"/>
</dbReference>
<dbReference type="InterPro" id="IPR005863">
    <property type="entry name" value="UDP-N-AcMur_synth"/>
</dbReference>
<dbReference type="NCBIfam" id="TIGR01143">
    <property type="entry name" value="murF"/>
    <property type="match status" value="1"/>
</dbReference>
<dbReference type="PANTHER" id="PTHR43024">
    <property type="entry name" value="UDP-N-ACETYLMURAMOYL-TRIPEPTIDE--D-ALANYL-D-ALANINE LIGASE"/>
    <property type="match status" value="1"/>
</dbReference>
<dbReference type="PANTHER" id="PTHR43024:SF1">
    <property type="entry name" value="UDP-N-ACETYLMURAMOYL-TRIPEPTIDE--D-ALANYL-D-ALANINE LIGASE"/>
    <property type="match status" value="1"/>
</dbReference>
<dbReference type="Pfam" id="PF01225">
    <property type="entry name" value="Mur_ligase"/>
    <property type="match status" value="1"/>
</dbReference>
<dbReference type="Pfam" id="PF02875">
    <property type="entry name" value="Mur_ligase_C"/>
    <property type="match status" value="1"/>
</dbReference>
<dbReference type="Pfam" id="PF08245">
    <property type="entry name" value="Mur_ligase_M"/>
    <property type="match status" value="1"/>
</dbReference>
<dbReference type="SUPFAM" id="SSF53623">
    <property type="entry name" value="MurD-like peptide ligases, catalytic domain"/>
    <property type="match status" value="1"/>
</dbReference>
<dbReference type="SUPFAM" id="SSF53244">
    <property type="entry name" value="MurD-like peptide ligases, peptide-binding domain"/>
    <property type="match status" value="1"/>
</dbReference>
<dbReference type="SUPFAM" id="SSF63418">
    <property type="entry name" value="MurE/MurF N-terminal domain"/>
    <property type="match status" value="1"/>
</dbReference>
<accession>P9WJL0</accession>
<accession>L0TAC8</accession>
<accession>O06220</accession>
<accession>P0A5L4</accession>
<comment type="function">
    <text evidence="1">Involved in cell wall formation. Catalyzes the final step in the synthesis of UDP-N-acetylmuramoyl-pentapeptide, the precursor of murein.</text>
</comment>
<comment type="catalytic activity">
    <reaction evidence="1">
        <text>D-alanyl-D-alanine + UDP-N-acetyl-alpha-D-muramoyl-L-alanyl-gamma-D-glutamyl-meso-2,6-diaminopimelate + ATP = UDP-N-acetyl-alpha-D-muramoyl-L-alanyl-gamma-D-glutamyl-meso-2,6-diaminopimeloyl-D-alanyl-D-alanine + ADP + phosphate + H(+)</text>
        <dbReference type="Rhea" id="RHEA:28374"/>
        <dbReference type="ChEBI" id="CHEBI:15378"/>
        <dbReference type="ChEBI" id="CHEBI:30616"/>
        <dbReference type="ChEBI" id="CHEBI:43474"/>
        <dbReference type="ChEBI" id="CHEBI:57822"/>
        <dbReference type="ChEBI" id="CHEBI:61386"/>
        <dbReference type="ChEBI" id="CHEBI:83905"/>
        <dbReference type="ChEBI" id="CHEBI:456216"/>
        <dbReference type="EC" id="6.3.2.10"/>
    </reaction>
</comment>
<comment type="pathway">
    <text evidence="1">Cell wall biogenesis; peptidoglycan biosynthesis.</text>
</comment>
<comment type="subcellular location">
    <subcellularLocation>
        <location evidence="1">Cytoplasm</location>
    </subcellularLocation>
</comment>
<comment type="similarity">
    <text evidence="1">Belongs to the MurCDEF family. MurF subfamily.</text>
</comment>
<evidence type="ECO:0000255" key="1">
    <source>
        <dbReference type="HAMAP-Rule" id="MF_02019"/>
    </source>
</evidence>